<gene>
    <name evidence="1" type="primary">xylB</name>
    <name type="ordered locus">SE_2085</name>
</gene>
<dbReference type="EC" id="2.7.1.17" evidence="1"/>
<dbReference type="EMBL" id="AE015929">
    <property type="protein sequence ID" value="AAO05727.1"/>
    <property type="molecule type" value="Genomic_DNA"/>
</dbReference>
<dbReference type="RefSeq" id="NP_765640.1">
    <property type="nucleotide sequence ID" value="NC_004461.1"/>
</dbReference>
<dbReference type="RefSeq" id="WP_002485370.1">
    <property type="nucleotide sequence ID" value="NZ_WBME01000013.1"/>
</dbReference>
<dbReference type="SMR" id="Q8CR47"/>
<dbReference type="GeneID" id="50017832"/>
<dbReference type="KEGG" id="sep:SE_2085"/>
<dbReference type="PATRIC" id="fig|176280.10.peg.2037"/>
<dbReference type="eggNOG" id="COG1070">
    <property type="taxonomic scope" value="Bacteria"/>
</dbReference>
<dbReference type="HOGENOM" id="CLU_009281_3_0_9"/>
<dbReference type="OrthoDB" id="9805576at2"/>
<dbReference type="Proteomes" id="UP000001411">
    <property type="component" value="Chromosome"/>
</dbReference>
<dbReference type="GO" id="GO:0005524">
    <property type="term" value="F:ATP binding"/>
    <property type="evidence" value="ECO:0007669"/>
    <property type="project" value="UniProtKB-UniRule"/>
</dbReference>
<dbReference type="GO" id="GO:0004856">
    <property type="term" value="F:D-xylulokinase activity"/>
    <property type="evidence" value="ECO:0007669"/>
    <property type="project" value="UniProtKB-UniRule"/>
</dbReference>
<dbReference type="GO" id="GO:0042732">
    <property type="term" value="P:D-xylose metabolic process"/>
    <property type="evidence" value="ECO:0007669"/>
    <property type="project" value="UniProtKB-KW"/>
</dbReference>
<dbReference type="GO" id="GO:0005998">
    <property type="term" value="P:xylulose catabolic process"/>
    <property type="evidence" value="ECO:0007669"/>
    <property type="project" value="UniProtKB-UniRule"/>
</dbReference>
<dbReference type="CDD" id="cd07808">
    <property type="entry name" value="ASKHA_NBD_FGGY_EcXK-like"/>
    <property type="match status" value="1"/>
</dbReference>
<dbReference type="Gene3D" id="3.30.420.40">
    <property type="match status" value="2"/>
</dbReference>
<dbReference type="HAMAP" id="MF_02220">
    <property type="entry name" value="XylB"/>
    <property type="match status" value="1"/>
</dbReference>
<dbReference type="InterPro" id="IPR043129">
    <property type="entry name" value="ATPase_NBD"/>
</dbReference>
<dbReference type="InterPro" id="IPR000577">
    <property type="entry name" value="Carb_kinase_FGGY"/>
</dbReference>
<dbReference type="InterPro" id="IPR018483">
    <property type="entry name" value="Carb_kinase_FGGY_CS"/>
</dbReference>
<dbReference type="InterPro" id="IPR018485">
    <property type="entry name" value="FGGY_C"/>
</dbReference>
<dbReference type="InterPro" id="IPR050406">
    <property type="entry name" value="FGGY_Carb_Kinase"/>
</dbReference>
<dbReference type="InterPro" id="IPR018484">
    <property type="entry name" value="FGGY_N"/>
</dbReference>
<dbReference type="InterPro" id="IPR006000">
    <property type="entry name" value="Xylulokinase"/>
</dbReference>
<dbReference type="NCBIfam" id="TIGR01312">
    <property type="entry name" value="XylB"/>
    <property type="match status" value="1"/>
</dbReference>
<dbReference type="PANTHER" id="PTHR43095">
    <property type="entry name" value="SUGAR KINASE"/>
    <property type="match status" value="1"/>
</dbReference>
<dbReference type="PANTHER" id="PTHR43095:SF5">
    <property type="entry name" value="XYLULOSE KINASE"/>
    <property type="match status" value="1"/>
</dbReference>
<dbReference type="Pfam" id="PF02782">
    <property type="entry name" value="FGGY_C"/>
    <property type="match status" value="1"/>
</dbReference>
<dbReference type="Pfam" id="PF00370">
    <property type="entry name" value="FGGY_N"/>
    <property type="match status" value="1"/>
</dbReference>
<dbReference type="PIRSF" id="PIRSF000538">
    <property type="entry name" value="GlpK"/>
    <property type="match status" value="1"/>
</dbReference>
<dbReference type="SUPFAM" id="SSF53067">
    <property type="entry name" value="Actin-like ATPase domain"/>
    <property type="match status" value="2"/>
</dbReference>
<dbReference type="PROSITE" id="PS00933">
    <property type="entry name" value="FGGY_KINASES_1"/>
    <property type="match status" value="1"/>
</dbReference>
<dbReference type="PROSITE" id="PS00445">
    <property type="entry name" value="FGGY_KINASES_2"/>
    <property type="match status" value="1"/>
</dbReference>
<protein>
    <recommendedName>
        <fullName evidence="1">Xylulose kinase</fullName>
        <shortName evidence="1">Xylulokinase</shortName>
        <ecNumber evidence="1">2.7.1.17</ecNumber>
    </recommendedName>
</protein>
<organism>
    <name type="scientific">Staphylococcus epidermidis (strain ATCC 12228 / FDA PCI 1200)</name>
    <dbReference type="NCBI Taxonomy" id="176280"/>
    <lineage>
        <taxon>Bacteria</taxon>
        <taxon>Bacillati</taxon>
        <taxon>Bacillota</taxon>
        <taxon>Bacilli</taxon>
        <taxon>Bacillales</taxon>
        <taxon>Staphylococcaceae</taxon>
        <taxon>Staphylococcus</taxon>
    </lineage>
</organism>
<feature type="chain" id="PRO_0000059555" description="Xylulose kinase">
    <location>
        <begin position="1"/>
        <end position="496"/>
    </location>
</feature>
<feature type="active site" description="Proton acceptor" evidence="1">
    <location>
        <position position="237"/>
    </location>
</feature>
<feature type="binding site" evidence="1">
    <location>
        <begin position="83"/>
        <end position="84"/>
    </location>
    <ligand>
        <name>substrate</name>
    </ligand>
</feature>
<feature type="site" description="Important for activity" evidence="1">
    <location>
        <position position="10"/>
    </location>
</feature>
<sequence length="496" mass="55295">MVKEVVLGIDLGTSAIKIIAVDQLGNVIESVSETLKLYQEHPGYSEQDPNEWFEATKKGIKELIQSTEMSDKIVKGISFSGQMHGLVIVDDNGIPLRKAILWNDTRNSIQCRQIEDIYGERLNYNPILEGFTLPKMLWVQQHEPEIWNRVDVFMLPKDYLRYCLTQTIHMEYSDACSTLLFNPENYEWTKDVGDTFNIGDIYPPLVKSHSYVGNVTSSLAKELGLSSDVAVYAGGGDNACGAIGAGVIHDKSALCSIGTSGVVLNVEYQRVTSYDSNLHLFNHSVPDTYYAMGVTLAAGYSLNWLKQTFFENESFEEILNLAASSKIGANGLLFTPYLAGERTPHGDAQIRGSFIGISGQHTKADFARAVIEGITYSLYDSIKIMRRAGHEMNSITSIGGGAKSRFWLQLQADIFNVQIKRLKHEEGPSMGAAILAAYGLGWFKTIESCVEAFIKVDEVFEPNNENHDLYEQYYSVYEAIYKQTKQLTADLLTITN</sequence>
<evidence type="ECO:0000255" key="1">
    <source>
        <dbReference type="HAMAP-Rule" id="MF_02220"/>
    </source>
</evidence>
<evidence type="ECO:0000305" key="2"/>
<reference key="1">
    <citation type="journal article" date="2003" name="Mol. Microbiol.">
        <title>Genome-based analysis of virulence genes in a non-biofilm-forming Staphylococcus epidermidis strain (ATCC 12228).</title>
        <authorList>
            <person name="Zhang Y.-Q."/>
            <person name="Ren S.-X."/>
            <person name="Li H.-L."/>
            <person name="Wang Y.-X."/>
            <person name="Fu G."/>
            <person name="Yang J."/>
            <person name="Qin Z.-Q."/>
            <person name="Miao Y.-G."/>
            <person name="Wang W.-Y."/>
            <person name="Chen R.-S."/>
            <person name="Shen Y."/>
            <person name="Chen Z."/>
            <person name="Yuan Z.-H."/>
            <person name="Zhao G.-P."/>
            <person name="Qu D."/>
            <person name="Danchin A."/>
            <person name="Wen Y.-M."/>
        </authorList>
    </citation>
    <scope>NUCLEOTIDE SEQUENCE [LARGE SCALE GENOMIC DNA]</scope>
    <source>
        <strain>ATCC 12228 / FDA PCI 1200</strain>
    </source>
</reference>
<name>XYLB_STAES</name>
<keyword id="KW-0067">ATP-binding</keyword>
<keyword id="KW-0119">Carbohydrate metabolism</keyword>
<keyword id="KW-0418">Kinase</keyword>
<keyword id="KW-0547">Nucleotide-binding</keyword>
<keyword id="KW-0808">Transferase</keyword>
<keyword id="KW-0859">Xylose metabolism</keyword>
<proteinExistence type="inferred from homology"/>
<accession>Q8CR47</accession>
<comment type="function">
    <text evidence="1">Catalyzes the phosphorylation of D-xylulose to D-xylulose 5-phosphate.</text>
</comment>
<comment type="catalytic activity">
    <reaction evidence="1">
        <text>D-xylulose + ATP = D-xylulose 5-phosphate + ADP + H(+)</text>
        <dbReference type="Rhea" id="RHEA:10964"/>
        <dbReference type="ChEBI" id="CHEBI:15378"/>
        <dbReference type="ChEBI" id="CHEBI:17140"/>
        <dbReference type="ChEBI" id="CHEBI:30616"/>
        <dbReference type="ChEBI" id="CHEBI:57737"/>
        <dbReference type="ChEBI" id="CHEBI:456216"/>
        <dbReference type="EC" id="2.7.1.17"/>
    </reaction>
</comment>
<comment type="similarity">
    <text evidence="1 2">Belongs to the FGGY kinase family.</text>
</comment>